<protein>
    <recommendedName>
        <fullName evidence="3">Peptide PGLa-R2</fullName>
    </recommendedName>
</protein>
<sequence>GMASKAGAIAGKIAKVALKAL</sequence>
<organism evidence="3">
    <name type="scientific">Xenopus ruwenzoriensis</name>
    <name type="common">Uganda clawed frog</name>
    <dbReference type="NCBI Taxonomy" id="105430"/>
    <lineage>
        <taxon>Eukaryota</taxon>
        <taxon>Metazoa</taxon>
        <taxon>Chordata</taxon>
        <taxon>Craniata</taxon>
        <taxon>Vertebrata</taxon>
        <taxon>Euteleostomi</taxon>
        <taxon>Amphibia</taxon>
        <taxon>Batrachia</taxon>
        <taxon>Anura</taxon>
        <taxon>Pipoidea</taxon>
        <taxon>Pipidae</taxon>
        <taxon>Xenopodinae</taxon>
        <taxon>Xenopus</taxon>
        <taxon>Xenopus</taxon>
    </lineage>
</organism>
<feature type="peptide" id="PRO_0000440927" description="Peptide PGLa-R2" evidence="2">
    <location>
        <begin position="1"/>
        <end position="21"/>
    </location>
</feature>
<feature type="modified residue" description="Leucine amide" evidence="2">
    <location>
        <position position="21"/>
    </location>
</feature>
<comment type="function">
    <text evidence="1">Antimicrobial peptide.</text>
</comment>
<comment type="subcellular location">
    <subcellularLocation>
        <location evidence="2">Secreted</location>
    </subcellularLocation>
</comment>
<comment type="tissue specificity">
    <text evidence="5">Expressed by the skin glands.</text>
</comment>
<comment type="mass spectrometry"/>
<comment type="similarity">
    <text evidence="4">Belongs to the gastrin/cholecystokinin family. Magainin subfamily.</text>
</comment>
<accession>C0HKP0</accession>
<evidence type="ECO:0000250" key="1">
    <source>
        <dbReference type="UniProtKB" id="C0HK87"/>
    </source>
</evidence>
<evidence type="ECO:0000269" key="2">
    <source>
    </source>
</evidence>
<evidence type="ECO:0000303" key="3">
    <source>
    </source>
</evidence>
<evidence type="ECO:0000305" key="4"/>
<evidence type="ECO:0000305" key="5">
    <source>
    </source>
</evidence>
<keyword id="KW-0027">Amidation</keyword>
<keyword id="KW-0878">Amphibian defense peptide</keyword>
<keyword id="KW-0929">Antimicrobial</keyword>
<keyword id="KW-0903">Direct protein sequencing</keyword>
<keyword id="KW-0964">Secreted</keyword>
<name>PGLR2_XENRU</name>
<proteinExistence type="evidence at protein level"/>
<reference evidence="4" key="1">
    <citation type="journal article" date="2016" name="Comp. Biochem. Physiol.">
        <title>Peptidomic analysis of the extensive array of host-defense peptides in skin secretions of the dodecaploid frog Xenopus ruwenzoriensis (Pipidae).</title>
        <authorList>
            <person name="Coquet L."/>
            <person name="Kolodziejek J."/>
            <person name="Jouenne T."/>
            <person name="Nowotny N."/>
            <person name="King J.D."/>
            <person name="Conlon J.M."/>
        </authorList>
    </citation>
    <scope>PROTEIN SEQUENCE</scope>
    <scope>SUBCELLULAR LOCATION</scope>
    <scope>MASS SPECTROMETRY</scope>
    <scope>AMIDATION AT LEU-21</scope>
    <source>
        <tissue evidence="3">Skin secretion</tissue>
    </source>
</reference>
<dbReference type="GO" id="GO:0005576">
    <property type="term" value="C:extracellular region"/>
    <property type="evidence" value="ECO:0007669"/>
    <property type="project" value="UniProtKB-SubCell"/>
</dbReference>
<dbReference type="GO" id="GO:0006952">
    <property type="term" value="P:defense response"/>
    <property type="evidence" value="ECO:0007669"/>
    <property type="project" value="UniProtKB-KW"/>
</dbReference>